<protein>
    <recommendedName>
        <fullName>Malonyl CoA-acyl carrier protein transacylase</fullName>
        <shortName>MCT</shortName>
        <ecNumber>2.3.1.39</ecNumber>
    </recommendedName>
</protein>
<name>FABD_MYCTO</name>
<dbReference type="EC" id="2.3.1.39"/>
<dbReference type="EMBL" id="AE000516">
    <property type="protein sequence ID" value="AAK46587.1"/>
    <property type="molecule type" value="Genomic_DNA"/>
</dbReference>
<dbReference type="PIR" id="G70778">
    <property type="entry name" value="G70778"/>
</dbReference>
<dbReference type="RefSeq" id="WP_003411559.1">
    <property type="nucleotide sequence ID" value="NZ_KK341227.1"/>
</dbReference>
<dbReference type="SMR" id="P9WNG4"/>
<dbReference type="KEGG" id="mtc:MT2303"/>
<dbReference type="PATRIC" id="fig|83331.31.peg.2480"/>
<dbReference type="HOGENOM" id="CLU_030558_1_2_11"/>
<dbReference type="UniPathway" id="UPA00094"/>
<dbReference type="Proteomes" id="UP000001020">
    <property type="component" value="Chromosome"/>
</dbReference>
<dbReference type="GO" id="GO:0005829">
    <property type="term" value="C:cytosol"/>
    <property type="evidence" value="ECO:0007669"/>
    <property type="project" value="TreeGrafter"/>
</dbReference>
<dbReference type="GO" id="GO:0004314">
    <property type="term" value="F:[acyl-carrier-protein] S-malonyltransferase activity"/>
    <property type="evidence" value="ECO:0007669"/>
    <property type="project" value="UniProtKB-EC"/>
</dbReference>
<dbReference type="GO" id="GO:0006633">
    <property type="term" value="P:fatty acid biosynthetic process"/>
    <property type="evidence" value="ECO:0007669"/>
    <property type="project" value="UniProtKB-UniPathway"/>
</dbReference>
<dbReference type="FunFam" id="3.30.70.250:FF:000002">
    <property type="entry name" value="Malonyl CoA-ACP transacylase"/>
    <property type="match status" value="1"/>
</dbReference>
<dbReference type="Gene3D" id="3.30.70.250">
    <property type="entry name" value="Malonyl-CoA ACP transacylase, ACP-binding"/>
    <property type="match status" value="1"/>
</dbReference>
<dbReference type="Gene3D" id="3.40.366.10">
    <property type="entry name" value="Malonyl-Coenzyme A Acyl Carrier Protein, domain 2"/>
    <property type="match status" value="1"/>
</dbReference>
<dbReference type="InterPro" id="IPR001227">
    <property type="entry name" value="Ac_transferase_dom_sf"/>
</dbReference>
<dbReference type="InterPro" id="IPR014043">
    <property type="entry name" value="Acyl_transferase_dom"/>
</dbReference>
<dbReference type="InterPro" id="IPR016035">
    <property type="entry name" value="Acyl_Trfase/lysoPLipase"/>
</dbReference>
<dbReference type="InterPro" id="IPR050858">
    <property type="entry name" value="Mal-CoA-ACP_Trans/PKS_FabD"/>
</dbReference>
<dbReference type="InterPro" id="IPR016036">
    <property type="entry name" value="Malonyl_transacylase_ACP-bd"/>
</dbReference>
<dbReference type="PANTHER" id="PTHR42681">
    <property type="entry name" value="MALONYL-COA-ACYL CARRIER PROTEIN TRANSACYLASE, MITOCHONDRIAL"/>
    <property type="match status" value="1"/>
</dbReference>
<dbReference type="PANTHER" id="PTHR42681:SF1">
    <property type="entry name" value="MALONYL-COA-ACYL CARRIER PROTEIN TRANSACYLASE, MITOCHONDRIAL"/>
    <property type="match status" value="1"/>
</dbReference>
<dbReference type="Pfam" id="PF00698">
    <property type="entry name" value="Acyl_transf_1"/>
    <property type="match status" value="1"/>
</dbReference>
<dbReference type="SMART" id="SM00827">
    <property type="entry name" value="PKS_AT"/>
    <property type="match status" value="1"/>
</dbReference>
<dbReference type="SUPFAM" id="SSF52151">
    <property type="entry name" value="FabD/lysophospholipase-like"/>
    <property type="match status" value="1"/>
</dbReference>
<dbReference type="SUPFAM" id="SSF55048">
    <property type="entry name" value="Probable ACP-binding domain of malonyl-CoA ACP transacylase"/>
    <property type="match status" value="1"/>
</dbReference>
<keyword id="KW-0012">Acyltransferase</keyword>
<keyword id="KW-0275">Fatty acid biosynthesis</keyword>
<keyword id="KW-0276">Fatty acid metabolism</keyword>
<keyword id="KW-0444">Lipid biosynthesis</keyword>
<keyword id="KW-0443">Lipid metabolism</keyword>
<keyword id="KW-1185">Reference proteome</keyword>
<keyword id="KW-0808">Transferase</keyword>
<sequence length="302" mass="30788">MIALLAPGQGSQTEGMLSPWLQLPGAADQIAAWSKAADLDLARLGTTASTEEITDTAVAQPLIVAATLLAHQELARRCVLAGKDVIVAGHSVGEIAAYAIAGVIAADDAVALAATRGAEMAKACATEPTGMSAVLGGDETEVLSRLEQLDLVPANRNAAGQIVAAGRLTALEKLAEDPPAKARVRALGVAGAFHTEFMAPALDGFAAAAANIATADPTATLLSNRDGKPVTSAAAAMDTLVSQLTQPVRWDLCTATLREHTVTAIVEFPPAGTLSGIAKRELRGVPARAVKSPADLDELANL</sequence>
<proteinExistence type="inferred from homology"/>
<comment type="catalytic activity">
    <reaction>
        <text>holo-[ACP] + malonyl-CoA = malonyl-[ACP] + CoA</text>
        <dbReference type="Rhea" id="RHEA:41792"/>
        <dbReference type="Rhea" id="RHEA-COMP:9623"/>
        <dbReference type="Rhea" id="RHEA-COMP:9685"/>
        <dbReference type="ChEBI" id="CHEBI:57287"/>
        <dbReference type="ChEBI" id="CHEBI:57384"/>
        <dbReference type="ChEBI" id="CHEBI:64479"/>
        <dbReference type="ChEBI" id="CHEBI:78449"/>
        <dbReference type="EC" id="2.3.1.39"/>
    </reaction>
</comment>
<comment type="pathway">
    <text>Lipid metabolism; fatty acid biosynthesis.</text>
</comment>
<comment type="similarity">
    <text evidence="2">Belongs to the FabD family.</text>
</comment>
<accession>P9WNG4</accession>
<accession>L0TAL7</accession>
<accession>P63458</accession>
<accession>Q10501</accession>
<gene>
    <name type="primary">fabD</name>
    <name type="ordered locus">MT2303</name>
</gene>
<feature type="chain" id="PRO_0000427131" description="Malonyl CoA-acyl carrier protein transacylase">
    <location>
        <begin position="1"/>
        <end position="302"/>
    </location>
</feature>
<feature type="active site" evidence="1">
    <location>
        <position position="91"/>
    </location>
</feature>
<feature type="active site" evidence="1">
    <location>
        <position position="194"/>
    </location>
</feature>
<reference key="1">
    <citation type="journal article" date="2002" name="J. Bacteriol.">
        <title>Whole-genome comparison of Mycobacterium tuberculosis clinical and laboratory strains.</title>
        <authorList>
            <person name="Fleischmann R.D."/>
            <person name="Alland D."/>
            <person name="Eisen J.A."/>
            <person name="Carpenter L."/>
            <person name="White O."/>
            <person name="Peterson J.D."/>
            <person name="DeBoy R.T."/>
            <person name="Dodson R.J."/>
            <person name="Gwinn M.L."/>
            <person name="Haft D.H."/>
            <person name="Hickey E.K."/>
            <person name="Kolonay J.F."/>
            <person name="Nelson W.C."/>
            <person name="Umayam L.A."/>
            <person name="Ermolaeva M.D."/>
            <person name="Salzberg S.L."/>
            <person name="Delcher A."/>
            <person name="Utterback T.R."/>
            <person name="Weidman J.F."/>
            <person name="Khouri H.M."/>
            <person name="Gill J."/>
            <person name="Mikula A."/>
            <person name="Bishai W."/>
            <person name="Jacobs W.R. Jr."/>
            <person name="Venter J.C."/>
            <person name="Fraser C.M."/>
        </authorList>
    </citation>
    <scope>NUCLEOTIDE SEQUENCE [LARGE SCALE GENOMIC DNA]</scope>
    <source>
        <strain>CDC 1551 / Oshkosh</strain>
    </source>
</reference>
<organism>
    <name type="scientific">Mycobacterium tuberculosis (strain CDC 1551 / Oshkosh)</name>
    <dbReference type="NCBI Taxonomy" id="83331"/>
    <lineage>
        <taxon>Bacteria</taxon>
        <taxon>Bacillati</taxon>
        <taxon>Actinomycetota</taxon>
        <taxon>Actinomycetes</taxon>
        <taxon>Mycobacteriales</taxon>
        <taxon>Mycobacteriaceae</taxon>
        <taxon>Mycobacterium</taxon>
        <taxon>Mycobacterium tuberculosis complex</taxon>
    </lineage>
</organism>
<evidence type="ECO:0000250" key="1"/>
<evidence type="ECO:0000305" key="2"/>